<organism>
    <name type="scientific">Arabidopsis thaliana</name>
    <name type="common">Mouse-ear cress</name>
    <dbReference type="NCBI Taxonomy" id="3702"/>
    <lineage>
        <taxon>Eukaryota</taxon>
        <taxon>Viridiplantae</taxon>
        <taxon>Streptophyta</taxon>
        <taxon>Embryophyta</taxon>
        <taxon>Tracheophyta</taxon>
        <taxon>Spermatophyta</taxon>
        <taxon>Magnoliopsida</taxon>
        <taxon>eudicotyledons</taxon>
        <taxon>Gunneridae</taxon>
        <taxon>Pentapetalae</taxon>
        <taxon>rosids</taxon>
        <taxon>malvids</taxon>
        <taxon>Brassicales</taxon>
        <taxon>Brassicaceae</taxon>
        <taxon>Camelineae</taxon>
        <taxon>Arabidopsis</taxon>
    </lineage>
</organism>
<name>SCP35_ARATH</name>
<accession>Q9LEY1</accession>
<evidence type="ECO:0000250" key="1"/>
<evidence type="ECO:0000255" key="2"/>
<evidence type="ECO:0000269" key="3">
    <source>
    </source>
</evidence>
<evidence type="ECO:0000305" key="4"/>
<reference key="1">
    <citation type="journal article" date="2000" name="Nature">
        <title>Sequence and analysis of chromosome 5 of the plant Arabidopsis thaliana.</title>
        <authorList>
            <person name="Tabata S."/>
            <person name="Kaneko T."/>
            <person name="Nakamura Y."/>
            <person name="Kotani H."/>
            <person name="Kato T."/>
            <person name="Asamizu E."/>
            <person name="Miyajima N."/>
            <person name="Sasamoto S."/>
            <person name="Kimura T."/>
            <person name="Hosouchi T."/>
            <person name="Kawashima K."/>
            <person name="Kohara M."/>
            <person name="Matsumoto M."/>
            <person name="Matsuno A."/>
            <person name="Muraki A."/>
            <person name="Nakayama S."/>
            <person name="Nakazaki N."/>
            <person name="Naruo K."/>
            <person name="Okumura S."/>
            <person name="Shinpo S."/>
            <person name="Takeuchi C."/>
            <person name="Wada T."/>
            <person name="Watanabe A."/>
            <person name="Yamada M."/>
            <person name="Yasuda M."/>
            <person name="Sato S."/>
            <person name="de la Bastide M."/>
            <person name="Huang E."/>
            <person name="Spiegel L."/>
            <person name="Gnoj L."/>
            <person name="O'Shaughnessy A."/>
            <person name="Preston R."/>
            <person name="Habermann K."/>
            <person name="Murray J."/>
            <person name="Johnson D."/>
            <person name="Rohlfing T."/>
            <person name="Nelson J."/>
            <person name="Stoneking T."/>
            <person name="Pepin K."/>
            <person name="Spieth J."/>
            <person name="Sekhon M."/>
            <person name="Armstrong J."/>
            <person name="Becker M."/>
            <person name="Belter E."/>
            <person name="Cordum H."/>
            <person name="Cordes M."/>
            <person name="Courtney L."/>
            <person name="Courtney W."/>
            <person name="Dante M."/>
            <person name="Du H."/>
            <person name="Edwards J."/>
            <person name="Fryman J."/>
            <person name="Haakensen B."/>
            <person name="Lamar E."/>
            <person name="Latreille P."/>
            <person name="Leonard S."/>
            <person name="Meyer R."/>
            <person name="Mulvaney E."/>
            <person name="Ozersky P."/>
            <person name="Riley A."/>
            <person name="Strowmatt C."/>
            <person name="Wagner-McPherson C."/>
            <person name="Wollam A."/>
            <person name="Yoakum M."/>
            <person name="Bell M."/>
            <person name="Dedhia N."/>
            <person name="Parnell L."/>
            <person name="Shah R."/>
            <person name="Rodriguez M."/>
            <person name="Hoon See L."/>
            <person name="Vil D."/>
            <person name="Baker J."/>
            <person name="Kirchoff K."/>
            <person name="Toth K."/>
            <person name="King L."/>
            <person name="Bahret A."/>
            <person name="Miller B."/>
            <person name="Marra M.A."/>
            <person name="Martienssen R."/>
            <person name="McCombie W.R."/>
            <person name="Wilson R.K."/>
            <person name="Murphy G."/>
            <person name="Bancroft I."/>
            <person name="Volckaert G."/>
            <person name="Wambutt R."/>
            <person name="Duesterhoeft A."/>
            <person name="Stiekema W."/>
            <person name="Pohl T."/>
            <person name="Entian K.-D."/>
            <person name="Terryn N."/>
            <person name="Hartley N."/>
            <person name="Bent E."/>
            <person name="Johnson S."/>
            <person name="Langham S.-A."/>
            <person name="McCullagh B."/>
            <person name="Robben J."/>
            <person name="Grymonprez B."/>
            <person name="Zimmermann W."/>
            <person name="Ramsperger U."/>
            <person name="Wedler H."/>
            <person name="Balke K."/>
            <person name="Wedler E."/>
            <person name="Peters S."/>
            <person name="van Staveren M."/>
            <person name="Dirkse W."/>
            <person name="Mooijman P."/>
            <person name="Klein Lankhorst R."/>
            <person name="Weitzenegger T."/>
            <person name="Bothe G."/>
            <person name="Rose M."/>
            <person name="Hauf J."/>
            <person name="Berneiser S."/>
            <person name="Hempel S."/>
            <person name="Feldpausch M."/>
            <person name="Lamberth S."/>
            <person name="Villarroel R."/>
            <person name="Gielen J."/>
            <person name="Ardiles W."/>
            <person name="Bents O."/>
            <person name="Lemcke K."/>
            <person name="Kolesov G."/>
            <person name="Mayer K.F.X."/>
            <person name="Rudd S."/>
            <person name="Schoof H."/>
            <person name="Schueller C."/>
            <person name="Zaccaria P."/>
            <person name="Mewes H.-W."/>
            <person name="Bevan M."/>
            <person name="Fransz P.F."/>
        </authorList>
    </citation>
    <scope>NUCLEOTIDE SEQUENCE [LARGE SCALE GENOMIC DNA]</scope>
    <source>
        <strain>cv. Columbia</strain>
    </source>
</reference>
<reference key="2">
    <citation type="journal article" date="2017" name="Plant J.">
        <title>Araport11: a complete reannotation of the Arabidopsis thaliana reference genome.</title>
        <authorList>
            <person name="Cheng C.Y."/>
            <person name="Krishnakumar V."/>
            <person name="Chan A.P."/>
            <person name="Thibaud-Nissen F."/>
            <person name="Schobel S."/>
            <person name="Town C.D."/>
        </authorList>
    </citation>
    <scope>GENOME REANNOTATION</scope>
    <source>
        <strain>cv. Columbia</strain>
    </source>
</reference>
<reference key="3">
    <citation type="journal article" date="2003" name="Science">
        <title>Empirical analysis of transcriptional activity in the Arabidopsis genome.</title>
        <authorList>
            <person name="Yamada K."/>
            <person name="Lim J."/>
            <person name="Dale J.M."/>
            <person name="Chen H."/>
            <person name="Shinn P."/>
            <person name="Palm C.J."/>
            <person name="Southwick A.M."/>
            <person name="Wu H.C."/>
            <person name="Kim C.J."/>
            <person name="Nguyen M."/>
            <person name="Pham P.K."/>
            <person name="Cheuk R.F."/>
            <person name="Karlin-Newmann G."/>
            <person name="Liu S.X."/>
            <person name="Lam B."/>
            <person name="Sakano H."/>
            <person name="Wu T."/>
            <person name="Yu G."/>
            <person name="Miranda M."/>
            <person name="Quach H.L."/>
            <person name="Tripp M."/>
            <person name="Chang C.H."/>
            <person name="Lee J.M."/>
            <person name="Toriumi M.J."/>
            <person name="Chan M.M."/>
            <person name="Tang C.C."/>
            <person name="Onodera C.S."/>
            <person name="Deng J.M."/>
            <person name="Akiyama K."/>
            <person name="Ansari Y."/>
            <person name="Arakawa T."/>
            <person name="Banh J."/>
            <person name="Banno F."/>
            <person name="Bowser L."/>
            <person name="Brooks S.Y."/>
            <person name="Carninci P."/>
            <person name="Chao Q."/>
            <person name="Choy N."/>
            <person name="Enju A."/>
            <person name="Goldsmith A.D."/>
            <person name="Gurjal M."/>
            <person name="Hansen N.F."/>
            <person name="Hayashizaki Y."/>
            <person name="Johnson-Hopson C."/>
            <person name="Hsuan V.W."/>
            <person name="Iida K."/>
            <person name="Karnes M."/>
            <person name="Khan S."/>
            <person name="Koesema E."/>
            <person name="Ishida J."/>
            <person name="Jiang P.X."/>
            <person name="Jones T."/>
            <person name="Kawai J."/>
            <person name="Kamiya A."/>
            <person name="Meyers C."/>
            <person name="Nakajima M."/>
            <person name="Narusaka M."/>
            <person name="Seki M."/>
            <person name="Sakurai T."/>
            <person name="Satou M."/>
            <person name="Tamse R."/>
            <person name="Vaysberg M."/>
            <person name="Wallender E.K."/>
            <person name="Wong C."/>
            <person name="Yamamura Y."/>
            <person name="Yuan S."/>
            <person name="Shinozaki K."/>
            <person name="Davis R.W."/>
            <person name="Theologis A."/>
            <person name="Ecker J.R."/>
        </authorList>
    </citation>
    <scope>NUCLEOTIDE SEQUENCE [LARGE SCALE MRNA]</scope>
    <source>
        <strain>cv. Columbia</strain>
    </source>
</reference>
<reference key="4">
    <citation type="journal article" date="2005" name="Plant Physiol.">
        <title>An expression and bioinformatics analysis of the Arabidopsis serine carboxypeptidase-like gene family.</title>
        <authorList>
            <person name="Fraser C.M."/>
            <person name="Rider L.W."/>
            <person name="Chapple C."/>
        </authorList>
    </citation>
    <scope>GENE FAMILY</scope>
    <scope>TISSUE SPECIFICITY</scope>
    <scope>NOMENCLATURE</scope>
</reference>
<proteinExistence type="evidence at transcript level"/>
<feature type="signal peptide" evidence="2">
    <location>
        <begin position="1"/>
        <end position="20"/>
    </location>
</feature>
<feature type="chain" id="PRO_0000274650" description="Serine carboxypeptidase-like 35">
    <location>
        <begin position="21"/>
        <end position="480"/>
    </location>
</feature>
<feature type="active site" evidence="1">
    <location>
        <position position="188"/>
    </location>
</feature>
<feature type="active site" evidence="1">
    <location>
        <position position="399"/>
    </location>
</feature>
<feature type="active site" evidence="1">
    <location>
        <position position="452"/>
    </location>
</feature>
<feature type="glycosylation site" description="N-linked (GlcNAc...) asparagine" evidence="2">
    <location>
        <position position="79"/>
    </location>
</feature>
<feature type="glycosylation site" description="N-linked (GlcNAc...) asparagine" evidence="2">
    <location>
        <position position="146"/>
    </location>
</feature>
<feature type="glycosylation site" description="N-linked (GlcNAc...) asparagine" evidence="2">
    <location>
        <position position="265"/>
    </location>
</feature>
<feature type="glycosylation site" description="N-linked (GlcNAc...) asparagine" evidence="2">
    <location>
        <position position="352"/>
    </location>
</feature>
<feature type="disulfide bond" evidence="1">
    <location>
        <begin position="95"/>
        <end position="363"/>
    </location>
</feature>
<feature type="disulfide bond" evidence="1">
    <location>
        <begin position="257"/>
        <end position="270"/>
    </location>
</feature>
<feature type="disulfide bond" evidence="1">
    <location>
        <begin position="294"/>
        <end position="331"/>
    </location>
</feature>
<comment type="function">
    <text evidence="1">Probable carboxypeptidase.</text>
</comment>
<comment type="subcellular location">
    <subcellularLocation>
        <location evidence="4">Secreted</location>
    </subcellularLocation>
</comment>
<comment type="tissue specificity">
    <text evidence="3">Expressed in seedlings, flowers and siliques.</text>
</comment>
<comment type="similarity">
    <text evidence="4">Belongs to the peptidase S10 family.</text>
</comment>
<gene>
    <name type="primary">SCPL35</name>
    <name type="ordered locus">At5g08260</name>
    <name type="ORF">T22D6.200</name>
</gene>
<sequence length="480" mass="53608">MKKNALWLLCILVLPAIACGRKPEKKVTISSSGRKEDDLVTGLPGQPPVNFKHYAGYVNLGPEQKQKALFYWFFEAQQNSSRRPLVLWLNGGPGCSSIAYGAAQELGPFLVHDNGGKLTYNHFSWNKEANMLFLEAPVGVGFSYTNNSMDLQKLGDEVTASDSLAFLINWFMKFPEFRSSEFYISGESYAGHYVPQLAEVIYDRNKKVTKDSSINLKGFMIGNAVINEATDMAGLVDYAWSHAIISDEVHTSIHGSCSFEEDTTNKTEQCYNNFKGFMDAYNDIDIYSIYTPVCLSSLLSSSPRKPKIVVSPRLLTFDDLWDKFPAGYDPCTESYAENYFNRKDVQVALHANVTNLPYPYSPCSGVIKRWSDAPSTMIPIIQKLLTGGLRIWIYSGDTDGRVPVTSTRYSIKKMGLKVESPWRSWFHKSQVAGWVETYAGGLNFVTVRGAGHQVPALAPAQSLTLFSHFISSVPLPSKRF</sequence>
<protein>
    <recommendedName>
        <fullName>Serine carboxypeptidase-like 35</fullName>
        <ecNumber>3.4.16.-</ecNumber>
    </recommendedName>
</protein>
<dbReference type="EC" id="3.4.16.-"/>
<dbReference type="EMBL" id="AL357612">
    <property type="protein sequence ID" value="CAB93727.1"/>
    <property type="molecule type" value="Genomic_DNA"/>
</dbReference>
<dbReference type="EMBL" id="CP002688">
    <property type="protein sequence ID" value="AED91275.1"/>
    <property type="molecule type" value="Genomic_DNA"/>
</dbReference>
<dbReference type="EMBL" id="AF370244">
    <property type="protein sequence ID" value="AAK44059.1"/>
    <property type="molecule type" value="mRNA"/>
</dbReference>
<dbReference type="EMBL" id="AY062969">
    <property type="protein sequence ID" value="AAL33815.1"/>
    <property type="molecule type" value="mRNA"/>
</dbReference>
<dbReference type="PIR" id="T50511">
    <property type="entry name" value="T50511"/>
</dbReference>
<dbReference type="RefSeq" id="NP_196443.1">
    <property type="nucleotide sequence ID" value="NM_120909.4"/>
</dbReference>
<dbReference type="SMR" id="Q9LEY1"/>
<dbReference type="BioGRID" id="16000">
    <property type="interactions" value="7"/>
</dbReference>
<dbReference type="FunCoup" id="Q9LEY1">
    <property type="interactions" value="6"/>
</dbReference>
<dbReference type="STRING" id="3702.Q9LEY1"/>
<dbReference type="ESTHER" id="arath-SCP35">
    <property type="family name" value="Carboxypeptidase_S10"/>
</dbReference>
<dbReference type="MEROPS" id="S10.A34"/>
<dbReference type="GlyCosmos" id="Q9LEY1">
    <property type="glycosylation" value="4 sites, No reported glycans"/>
</dbReference>
<dbReference type="GlyGen" id="Q9LEY1">
    <property type="glycosylation" value="4 sites"/>
</dbReference>
<dbReference type="PaxDb" id="3702-AT5G08260.1"/>
<dbReference type="ProteomicsDB" id="232769"/>
<dbReference type="EnsemblPlants" id="AT5G08260.1">
    <property type="protein sequence ID" value="AT5G08260.1"/>
    <property type="gene ID" value="AT5G08260"/>
</dbReference>
<dbReference type="GeneID" id="830722"/>
<dbReference type="Gramene" id="AT5G08260.1">
    <property type="protein sequence ID" value="AT5G08260.1"/>
    <property type="gene ID" value="AT5G08260"/>
</dbReference>
<dbReference type="KEGG" id="ath:AT5G08260"/>
<dbReference type="Araport" id="AT5G08260"/>
<dbReference type="TAIR" id="AT5G08260">
    <property type="gene designation" value="SCPL35"/>
</dbReference>
<dbReference type="eggNOG" id="KOG1282">
    <property type="taxonomic scope" value="Eukaryota"/>
</dbReference>
<dbReference type="HOGENOM" id="CLU_008523_13_0_1"/>
<dbReference type="InParanoid" id="Q9LEY1"/>
<dbReference type="OMA" id="WYYRQQV"/>
<dbReference type="PhylomeDB" id="Q9LEY1"/>
<dbReference type="PRO" id="PR:Q9LEY1"/>
<dbReference type="Proteomes" id="UP000006548">
    <property type="component" value="Chromosome 5"/>
</dbReference>
<dbReference type="ExpressionAtlas" id="Q9LEY1">
    <property type="expression patterns" value="baseline and differential"/>
</dbReference>
<dbReference type="GO" id="GO:0005576">
    <property type="term" value="C:extracellular region"/>
    <property type="evidence" value="ECO:0007669"/>
    <property type="project" value="UniProtKB-SubCell"/>
</dbReference>
<dbReference type="GO" id="GO:0004185">
    <property type="term" value="F:serine-type carboxypeptidase activity"/>
    <property type="evidence" value="ECO:0007669"/>
    <property type="project" value="InterPro"/>
</dbReference>
<dbReference type="GO" id="GO:0006508">
    <property type="term" value="P:proteolysis"/>
    <property type="evidence" value="ECO:0007669"/>
    <property type="project" value="UniProtKB-KW"/>
</dbReference>
<dbReference type="FunFam" id="3.40.50.11320:FF:000001">
    <property type="entry name" value="Carboxypeptidase"/>
    <property type="match status" value="1"/>
</dbReference>
<dbReference type="FunFam" id="3.40.50.1820:FF:000013">
    <property type="entry name" value="Carboxypeptidase"/>
    <property type="match status" value="1"/>
</dbReference>
<dbReference type="Gene3D" id="3.40.50.11320">
    <property type="match status" value="1"/>
</dbReference>
<dbReference type="Gene3D" id="6.10.250.940">
    <property type="match status" value="1"/>
</dbReference>
<dbReference type="Gene3D" id="3.40.50.1820">
    <property type="entry name" value="alpha/beta hydrolase"/>
    <property type="match status" value="1"/>
</dbReference>
<dbReference type="InterPro" id="IPR029058">
    <property type="entry name" value="AB_hydrolase_fold"/>
</dbReference>
<dbReference type="InterPro" id="IPR001563">
    <property type="entry name" value="Peptidase_S10"/>
</dbReference>
<dbReference type="InterPro" id="IPR033124">
    <property type="entry name" value="Ser_caboxypep_his_AS"/>
</dbReference>
<dbReference type="InterPro" id="IPR018202">
    <property type="entry name" value="Ser_caboxypep_ser_AS"/>
</dbReference>
<dbReference type="PANTHER" id="PTHR11802:SF280">
    <property type="entry name" value="SERINE CARBOXYPEPTIDASE-LIKE 35"/>
    <property type="match status" value="1"/>
</dbReference>
<dbReference type="PANTHER" id="PTHR11802">
    <property type="entry name" value="SERINE PROTEASE FAMILY S10 SERINE CARBOXYPEPTIDASE"/>
    <property type="match status" value="1"/>
</dbReference>
<dbReference type="Pfam" id="PF00450">
    <property type="entry name" value="Peptidase_S10"/>
    <property type="match status" value="1"/>
</dbReference>
<dbReference type="PRINTS" id="PR00724">
    <property type="entry name" value="CRBOXYPTASEC"/>
</dbReference>
<dbReference type="SUPFAM" id="SSF53474">
    <property type="entry name" value="alpha/beta-Hydrolases"/>
    <property type="match status" value="1"/>
</dbReference>
<dbReference type="PROSITE" id="PS00560">
    <property type="entry name" value="CARBOXYPEPT_SER_HIS"/>
    <property type="match status" value="1"/>
</dbReference>
<dbReference type="PROSITE" id="PS00131">
    <property type="entry name" value="CARBOXYPEPT_SER_SER"/>
    <property type="match status" value="1"/>
</dbReference>
<keyword id="KW-0121">Carboxypeptidase</keyword>
<keyword id="KW-1015">Disulfide bond</keyword>
<keyword id="KW-0325">Glycoprotein</keyword>
<keyword id="KW-0378">Hydrolase</keyword>
<keyword id="KW-0645">Protease</keyword>
<keyword id="KW-1185">Reference proteome</keyword>
<keyword id="KW-0964">Secreted</keyword>
<keyword id="KW-0732">Signal</keyword>